<protein>
    <recommendedName>
        <fullName evidence="1">Transcriptional regulator CdrL</fullName>
    </recommendedName>
    <alternativeName>
        <fullName evidence="1">Cell division regulator long</fullName>
    </alternativeName>
    <alternativeName>
        <fullName>Double zinc ribbon protein OE_1323R</fullName>
    </alternativeName>
</protein>
<proteinExistence type="inferred from homology"/>
<evidence type="ECO:0000250" key="1">
    <source>
        <dbReference type="UniProtKB" id="Q9HSJ8"/>
    </source>
</evidence>
<evidence type="ECO:0000255" key="2"/>
<evidence type="ECO:0000256" key="3">
    <source>
        <dbReference type="SAM" id="MobiDB-lite"/>
    </source>
</evidence>
<evidence type="ECO:0000305" key="4"/>
<sequence length="172" mass="18025">MSKVTFRADDDLVAAVEDLDASKSEVMRNALRAYLTTHAAADDVPVESVNTPVRGAATDAQKDVNVTIRVSSPSAVEEVRTTPASGGRADAEEPGDDGETDAEHADTSATGDESVCSQCGAELSADHVYCPNCGGKATHRVFCECGDEIRADWAFCPRCGRRTVSGDALDSA</sequence>
<keyword id="KW-0131">Cell cycle</keyword>
<keyword id="KW-0132">Cell division</keyword>
<keyword id="KW-0963">Cytoplasm</keyword>
<keyword id="KW-0238">DNA-binding</keyword>
<keyword id="KW-0479">Metal-binding</keyword>
<keyword id="KW-0804">Transcription</keyword>
<keyword id="KW-0805">Transcription regulation</keyword>
<keyword id="KW-0862">Zinc</keyword>
<keyword id="KW-0863">Zinc-finger</keyword>
<gene>
    <name evidence="1" type="primary">cdrL</name>
    <name type="ordered locus">OE_1323R</name>
</gene>
<feature type="chain" id="PRO_0000431693" description="Transcriptional regulator CdrL">
    <location>
        <begin position="1"/>
        <end position="172"/>
    </location>
</feature>
<feature type="zinc finger region" description="DZANK-type" evidence="2">
    <location>
        <begin position="116"/>
        <end position="160"/>
    </location>
</feature>
<feature type="region of interest" description="Disordered" evidence="3">
    <location>
        <begin position="72"/>
        <end position="113"/>
    </location>
</feature>
<feature type="sequence conflict" description="In Ref. 1; AAB06190." evidence="4" ref="1">
    <original>G</original>
    <variation>ASG</variation>
    <location>
        <position position="120"/>
    </location>
</feature>
<reference key="1">
    <citation type="journal article" date="1996" name="J. Bacteriol.">
        <title>Isolation of an ftsZ homolog from the archaebacterium Halobacterium salinarium: implications for the evolution of FtsZ and tubulin.</title>
        <authorList>
            <person name="Margolin W."/>
            <person name="Wang R."/>
            <person name="Kumar M."/>
        </authorList>
    </citation>
    <scope>NUCLEOTIDE SEQUENCE [GENOMIC DNA]</scope>
    <source>
        <strain>R1 / S9 / Pho81</strain>
    </source>
</reference>
<reference key="2">
    <citation type="journal article" date="2008" name="Genomics">
        <title>Evolution in the laboratory: the genome of Halobacterium salinarum strain R1 compared to that of strain NRC-1.</title>
        <authorList>
            <person name="Pfeiffer F."/>
            <person name="Schuster S.C."/>
            <person name="Broicher A."/>
            <person name="Falb M."/>
            <person name="Palm P."/>
            <person name="Rodewald K."/>
            <person name="Ruepp A."/>
            <person name="Soppa J."/>
            <person name="Tittor J."/>
            <person name="Oesterhelt D."/>
        </authorList>
    </citation>
    <scope>NUCLEOTIDE SEQUENCE [LARGE SCALE GENOMIC DNA]</scope>
    <source>
        <strain>ATCC 29341 / DSM 671 / R1</strain>
    </source>
</reference>
<accession>B0R2V5</accession>
<accession>O74075</accession>
<comment type="function">
    <text evidence="1">Transcriptional regulator involved in the control of cell division.</text>
</comment>
<comment type="subcellular location">
    <subcellularLocation>
        <location evidence="1">Cytoplasm</location>
    </subcellularLocation>
</comment>
<comment type="similarity">
    <text evidence="4">Belongs to the CdrL family.</text>
</comment>
<comment type="sequence caution" evidence="4">
    <conflict type="frameshift">
        <sequence resource="EMBL-CDS" id="AAB06190"/>
    </conflict>
</comment>
<name>CDRL_HALS3</name>
<dbReference type="EMBL" id="U32860">
    <property type="protein sequence ID" value="AAB06190.1"/>
    <property type="status" value="ALT_FRAME"/>
    <property type="molecule type" value="Genomic_DNA"/>
</dbReference>
<dbReference type="EMBL" id="AM774415">
    <property type="protein sequence ID" value="CAP13065.1"/>
    <property type="molecule type" value="Genomic_DNA"/>
</dbReference>
<dbReference type="PIR" id="T44847">
    <property type="entry name" value="T44847"/>
</dbReference>
<dbReference type="RefSeq" id="WP_012289117.1">
    <property type="nucleotide sequence ID" value="NC_010364.1"/>
</dbReference>
<dbReference type="EnsemblBacteria" id="CAP13065">
    <property type="protein sequence ID" value="CAP13065"/>
    <property type="gene ID" value="OE_1323R"/>
</dbReference>
<dbReference type="KEGG" id="hsl:OE_1323R"/>
<dbReference type="HOGENOM" id="CLU_098526_0_0_2"/>
<dbReference type="Proteomes" id="UP000001321">
    <property type="component" value="Chromosome"/>
</dbReference>
<dbReference type="GO" id="GO:0005737">
    <property type="term" value="C:cytoplasm"/>
    <property type="evidence" value="ECO:0007669"/>
    <property type="project" value="UniProtKB-SubCell"/>
</dbReference>
<dbReference type="GO" id="GO:0003677">
    <property type="term" value="F:DNA binding"/>
    <property type="evidence" value="ECO:0007669"/>
    <property type="project" value="UniProtKB-KW"/>
</dbReference>
<dbReference type="GO" id="GO:0008270">
    <property type="term" value="F:zinc ion binding"/>
    <property type="evidence" value="ECO:0007669"/>
    <property type="project" value="UniProtKB-KW"/>
</dbReference>
<dbReference type="GO" id="GO:0051301">
    <property type="term" value="P:cell division"/>
    <property type="evidence" value="ECO:0007669"/>
    <property type="project" value="UniProtKB-KW"/>
</dbReference>
<dbReference type="InterPro" id="IPR025874">
    <property type="entry name" value="DZR"/>
</dbReference>
<dbReference type="Pfam" id="PF12773">
    <property type="entry name" value="DZR"/>
    <property type="match status" value="1"/>
</dbReference>
<organism>
    <name type="scientific">Halobacterium salinarum (strain ATCC 29341 / DSM 671 / R1)</name>
    <dbReference type="NCBI Taxonomy" id="478009"/>
    <lineage>
        <taxon>Archaea</taxon>
        <taxon>Methanobacteriati</taxon>
        <taxon>Methanobacteriota</taxon>
        <taxon>Stenosarchaea group</taxon>
        <taxon>Halobacteria</taxon>
        <taxon>Halobacteriales</taxon>
        <taxon>Halobacteriaceae</taxon>
        <taxon>Halobacterium</taxon>
        <taxon>Halobacterium salinarum NRC-34001</taxon>
    </lineage>
</organism>